<dbReference type="EMBL" id="DQ995199">
    <property type="protein sequence ID" value="ABJ91314.1"/>
    <property type="molecule type" value="Genomic_DNA"/>
</dbReference>
<dbReference type="EMBL" id="AP006715">
    <property type="protein sequence ID" value="BAE92423.1"/>
    <property type="molecule type" value="Genomic_DNA"/>
</dbReference>
<dbReference type="RefSeq" id="YP_536980.1">
    <property type="nucleotide sequence ID" value="NC_007932.1"/>
</dbReference>
<dbReference type="SMR" id="Q1XDI8"/>
<dbReference type="GeneID" id="3978926"/>
<dbReference type="GO" id="GO:0009507">
    <property type="term" value="C:chloroplast"/>
    <property type="evidence" value="ECO:0007669"/>
    <property type="project" value="UniProtKB-SubCell"/>
</dbReference>
<dbReference type="GO" id="GO:0022625">
    <property type="term" value="C:cytosolic large ribosomal subunit"/>
    <property type="evidence" value="ECO:0007669"/>
    <property type="project" value="TreeGrafter"/>
</dbReference>
<dbReference type="GO" id="GO:0019843">
    <property type="term" value="F:rRNA binding"/>
    <property type="evidence" value="ECO:0007669"/>
    <property type="project" value="UniProtKB-UniRule"/>
</dbReference>
<dbReference type="GO" id="GO:0003735">
    <property type="term" value="F:structural constituent of ribosome"/>
    <property type="evidence" value="ECO:0007669"/>
    <property type="project" value="InterPro"/>
</dbReference>
<dbReference type="GO" id="GO:0002181">
    <property type="term" value="P:cytoplasmic translation"/>
    <property type="evidence" value="ECO:0007669"/>
    <property type="project" value="TreeGrafter"/>
</dbReference>
<dbReference type="FunFam" id="3.90.930.12:FF:000001">
    <property type="entry name" value="50S ribosomal protein L6"/>
    <property type="match status" value="1"/>
</dbReference>
<dbReference type="Gene3D" id="3.90.930.12">
    <property type="entry name" value="Ribosomal protein L6, alpha-beta domain"/>
    <property type="match status" value="2"/>
</dbReference>
<dbReference type="HAMAP" id="MF_01365_B">
    <property type="entry name" value="Ribosomal_uL6_B"/>
    <property type="match status" value="1"/>
</dbReference>
<dbReference type="InterPro" id="IPR000702">
    <property type="entry name" value="Ribosomal_uL6-like"/>
</dbReference>
<dbReference type="InterPro" id="IPR036789">
    <property type="entry name" value="Ribosomal_uL6-like_a/b-dom_sf"/>
</dbReference>
<dbReference type="InterPro" id="IPR020040">
    <property type="entry name" value="Ribosomal_uL6_a/b-dom"/>
</dbReference>
<dbReference type="InterPro" id="IPR019906">
    <property type="entry name" value="Ribosomal_uL6_bac-type"/>
</dbReference>
<dbReference type="InterPro" id="IPR002358">
    <property type="entry name" value="Ribosomal_uL6_CS"/>
</dbReference>
<dbReference type="NCBIfam" id="TIGR03654">
    <property type="entry name" value="L6_bact"/>
    <property type="match status" value="1"/>
</dbReference>
<dbReference type="PANTHER" id="PTHR11655">
    <property type="entry name" value="60S/50S RIBOSOMAL PROTEIN L6/L9"/>
    <property type="match status" value="1"/>
</dbReference>
<dbReference type="PANTHER" id="PTHR11655:SF14">
    <property type="entry name" value="LARGE RIBOSOMAL SUBUNIT PROTEIN UL6M"/>
    <property type="match status" value="1"/>
</dbReference>
<dbReference type="Pfam" id="PF00347">
    <property type="entry name" value="Ribosomal_L6"/>
    <property type="match status" value="2"/>
</dbReference>
<dbReference type="PIRSF" id="PIRSF002162">
    <property type="entry name" value="Ribosomal_L6"/>
    <property type="match status" value="1"/>
</dbReference>
<dbReference type="PRINTS" id="PR00059">
    <property type="entry name" value="RIBOSOMALL6"/>
</dbReference>
<dbReference type="SUPFAM" id="SSF56053">
    <property type="entry name" value="Ribosomal protein L6"/>
    <property type="match status" value="2"/>
</dbReference>
<dbReference type="PROSITE" id="PS00525">
    <property type="entry name" value="RIBOSOMAL_L6_1"/>
    <property type="match status" value="1"/>
</dbReference>
<reference key="1">
    <citation type="submission" date="2006-09" db="EMBL/GenBank/DDBJ databases">
        <title>Cloning and analysis of the Porphyra yezoensis gene for rpl6.</title>
        <authorList>
            <person name="Wang M.Q."/>
            <person name="Mao Y.X."/>
        </authorList>
    </citation>
    <scope>NUCLEOTIDE SEQUENCE [GENOMIC DNA]</scope>
    <source>
        <strain>Qingdao</strain>
    </source>
</reference>
<reference key="2">
    <citation type="submission" date="2003-11" db="EMBL/GenBank/DDBJ databases">
        <title>Whole genome sequence of Porphyra yezoensis chloroplast.</title>
        <authorList>
            <person name="Kunimoto M."/>
            <person name="Morishima K."/>
            <person name="Yoshikawa M."/>
            <person name="Fukuda S."/>
            <person name="Kobayashi T."/>
            <person name="Kobayashi M."/>
            <person name="Okazaki T."/>
            <person name="Ohara I."/>
            <person name="Nakayama I."/>
        </authorList>
    </citation>
    <scope>NUCLEOTIDE SEQUENCE [LARGE SCALE GENOMIC DNA]</scope>
    <source>
        <strain>U-51</strain>
    </source>
</reference>
<sequence length="180" mass="19487">MSRIGKKIILLPTNLSTQFDGQTITVTGPKGTLSRTLPAGINLEILNDTIAVKTSGQTKMASQLHGLSRTLISNMIEGVSNGFFKKLQIQGVGYRSQIDNQDLILSVGYSHVVKIKPPANIEIKVENNTNITVSGIDKEVVGQVASTIRSIRPPEPYKGKGIRYQGEFVRRKAGKAGKGK</sequence>
<evidence type="ECO:0000250" key="1"/>
<evidence type="ECO:0000305" key="2"/>
<organism>
    <name type="scientific">Pyropia yezoensis</name>
    <name type="common">Susabi-nori</name>
    <name type="synonym">Porphyra yezoensis</name>
    <dbReference type="NCBI Taxonomy" id="2788"/>
    <lineage>
        <taxon>Eukaryota</taxon>
        <taxon>Rhodophyta</taxon>
        <taxon>Bangiophyceae</taxon>
        <taxon>Bangiales</taxon>
        <taxon>Bangiaceae</taxon>
        <taxon>Pyropia</taxon>
    </lineage>
</organism>
<feature type="chain" id="PRO_0000260982" description="Large ribosomal subunit protein uL6c">
    <location>
        <begin position="1"/>
        <end position="180"/>
    </location>
</feature>
<gene>
    <name type="primary">rpl6</name>
</gene>
<accession>Q1XDI8</accession>
<accession>A0MMA6</accession>
<keyword id="KW-0150">Chloroplast</keyword>
<keyword id="KW-0934">Plastid</keyword>
<keyword id="KW-0687">Ribonucleoprotein</keyword>
<keyword id="KW-0689">Ribosomal protein</keyword>
<keyword id="KW-0694">RNA-binding</keyword>
<keyword id="KW-0699">rRNA-binding</keyword>
<comment type="function">
    <text evidence="1">Binds 23S rRNA.</text>
</comment>
<comment type="subunit">
    <text evidence="1">Part of the 50S ribosomal subunit.</text>
</comment>
<comment type="subcellular location">
    <subcellularLocation>
        <location>Plastid</location>
        <location>Chloroplast</location>
    </subcellularLocation>
</comment>
<comment type="similarity">
    <text evidence="2">Belongs to the universal ribosomal protein uL6 family.</text>
</comment>
<protein>
    <recommendedName>
        <fullName evidence="2">Large ribosomal subunit protein uL6c</fullName>
    </recommendedName>
    <alternativeName>
        <fullName>50S ribosomal protein L6, chloroplastic</fullName>
    </alternativeName>
</protein>
<geneLocation type="chloroplast"/>
<name>RK6_PYRYE</name>
<proteinExistence type="inferred from homology"/>